<name>ASAH2_HUMAN</name>
<proteinExistence type="evidence at protein level"/>
<organism>
    <name type="scientific">Homo sapiens</name>
    <name type="common">Human</name>
    <dbReference type="NCBI Taxonomy" id="9606"/>
    <lineage>
        <taxon>Eukaryota</taxon>
        <taxon>Metazoa</taxon>
        <taxon>Chordata</taxon>
        <taxon>Craniata</taxon>
        <taxon>Vertebrata</taxon>
        <taxon>Euteleostomi</taxon>
        <taxon>Mammalia</taxon>
        <taxon>Eutheria</taxon>
        <taxon>Euarchontoglires</taxon>
        <taxon>Primates</taxon>
        <taxon>Haplorrhini</taxon>
        <taxon>Catarrhini</taxon>
        <taxon>Hominidae</taxon>
        <taxon>Homo</taxon>
    </lineage>
</organism>
<reference key="1">
    <citation type="journal article" date="2003" name="Gene">
        <title>Neutral ceramidase gene: role in regulating ceramide-induced apoptosis.</title>
        <authorList>
            <person name="Choi M.S."/>
            <person name="Anderson M.A."/>
            <person name="Zhang Z."/>
            <person name="Zimonjic D.B."/>
            <person name="Popescu N."/>
            <person name="Mukherjee A.B."/>
        </authorList>
    </citation>
    <scope>NUCLEOTIDE SEQUENCE [GENOMIC DNA]</scope>
</reference>
<reference key="2">
    <citation type="journal article" date="2005" name="J. Biol. Chem.">
        <title>Roles for C16-ceramide and sphingosine 1-phosphate in regulating hepatocyte apoptosis in response to tumor necrosis factor-alpha.</title>
        <authorList>
            <person name="Osawa Y."/>
            <person name="Uchinami H."/>
            <person name="Bielawski J."/>
            <person name="Schwabe R.F."/>
            <person name="Hannun Y.A."/>
            <person name="Brenner D.A."/>
        </authorList>
    </citation>
    <scope>NUCLEOTIDE SEQUENCE [MRNA] (ISOFORM 1)</scope>
    <scope>FUNCTION</scope>
    <scope>CATALYTIC ACTIVITY</scope>
    <scope>PATHWAY</scope>
</reference>
<reference key="3">
    <citation type="journal article" date="2004" name="Nature">
        <title>The DNA sequence and comparative analysis of human chromosome 10.</title>
        <authorList>
            <person name="Deloukas P."/>
            <person name="Earthrowl M.E."/>
            <person name="Grafham D.V."/>
            <person name="Rubenfield M."/>
            <person name="French L."/>
            <person name="Steward C.A."/>
            <person name="Sims S.K."/>
            <person name="Jones M.C."/>
            <person name="Searle S."/>
            <person name="Scott C."/>
            <person name="Howe K."/>
            <person name="Hunt S.E."/>
            <person name="Andrews T.D."/>
            <person name="Gilbert J.G.R."/>
            <person name="Swarbreck D."/>
            <person name="Ashurst J.L."/>
            <person name="Taylor A."/>
            <person name="Battles J."/>
            <person name="Bird C.P."/>
            <person name="Ainscough R."/>
            <person name="Almeida J.P."/>
            <person name="Ashwell R.I.S."/>
            <person name="Ambrose K.D."/>
            <person name="Babbage A.K."/>
            <person name="Bagguley C.L."/>
            <person name="Bailey J."/>
            <person name="Banerjee R."/>
            <person name="Bates K."/>
            <person name="Beasley H."/>
            <person name="Bray-Allen S."/>
            <person name="Brown A.J."/>
            <person name="Brown J.Y."/>
            <person name="Burford D.C."/>
            <person name="Burrill W."/>
            <person name="Burton J."/>
            <person name="Cahill P."/>
            <person name="Camire D."/>
            <person name="Carter N.P."/>
            <person name="Chapman J.C."/>
            <person name="Clark S.Y."/>
            <person name="Clarke G."/>
            <person name="Clee C.M."/>
            <person name="Clegg S."/>
            <person name="Corby N."/>
            <person name="Coulson A."/>
            <person name="Dhami P."/>
            <person name="Dutta I."/>
            <person name="Dunn M."/>
            <person name="Faulkner L."/>
            <person name="Frankish A."/>
            <person name="Frankland J.A."/>
            <person name="Garner P."/>
            <person name="Garnett J."/>
            <person name="Gribble S."/>
            <person name="Griffiths C."/>
            <person name="Grocock R."/>
            <person name="Gustafson E."/>
            <person name="Hammond S."/>
            <person name="Harley J.L."/>
            <person name="Hart E."/>
            <person name="Heath P.D."/>
            <person name="Ho T.P."/>
            <person name="Hopkins B."/>
            <person name="Horne J."/>
            <person name="Howden P.J."/>
            <person name="Huckle E."/>
            <person name="Hynds C."/>
            <person name="Johnson C."/>
            <person name="Johnson D."/>
            <person name="Kana A."/>
            <person name="Kay M."/>
            <person name="Kimberley A.M."/>
            <person name="Kershaw J.K."/>
            <person name="Kokkinaki M."/>
            <person name="Laird G.K."/>
            <person name="Lawlor S."/>
            <person name="Lee H.M."/>
            <person name="Leongamornlert D.A."/>
            <person name="Laird G."/>
            <person name="Lloyd C."/>
            <person name="Lloyd D.M."/>
            <person name="Loveland J."/>
            <person name="Lovell J."/>
            <person name="McLaren S."/>
            <person name="McLay K.E."/>
            <person name="McMurray A."/>
            <person name="Mashreghi-Mohammadi M."/>
            <person name="Matthews L."/>
            <person name="Milne S."/>
            <person name="Nickerson T."/>
            <person name="Nguyen M."/>
            <person name="Overton-Larty E."/>
            <person name="Palmer S.A."/>
            <person name="Pearce A.V."/>
            <person name="Peck A.I."/>
            <person name="Pelan S."/>
            <person name="Phillimore B."/>
            <person name="Porter K."/>
            <person name="Rice C.M."/>
            <person name="Rogosin A."/>
            <person name="Ross M.T."/>
            <person name="Sarafidou T."/>
            <person name="Sehra H.K."/>
            <person name="Shownkeen R."/>
            <person name="Skuce C.D."/>
            <person name="Smith M."/>
            <person name="Standring L."/>
            <person name="Sycamore N."/>
            <person name="Tester J."/>
            <person name="Thorpe A."/>
            <person name="Torcasso W."/>
            <person name="Tracey A."/>
            <person name="Tromans A."/>
            <person name="Tsolas J."/>
            <person name="Wall M."/>
            <person name="Walsh J."/>
            <person name="Wang H."/>
            <person name="Weinstock K."/>
            <person name="West A.P."/>
            <person name="Willey D.L."/>
            <person name="Whitehead S.L."/>
            <person name="Wilming L."/>
            <person name="Wray P.W."/>
            <person name="Young L."/>
            <person name="Chen Y."/>
            <person name="Lovering R.C."/>
            <person name="Moschonas N.K."/>
            <person name="Siebert R."/>
            <person name="Fechtel K."/>
            <person name="Bentley D."/>
            <person name="Durbin R.M."/>
            <person name="Hubbard T."/>
            <person name="Doucette-Stamm L."/>
            <person name="Beck S."/>
            <person name="Smith D.R."/>
            <person name="Rogers J."/>
        </authorList>
    </citation>
    <scope>NUCLEOTIDE SEQUENCE [LARGE SCALE GENOMIC DNA]</scope>
</reference>
<reference key="4">
    <citation type="journal article" date="2000" name="J. Biol. Chem.">
        <title>Molecular cloning and characterization of a human mitochondrial ceramidase.</title>
        <authorList>
            <person name="El Bawab S."/>
            <person name="Roddy P."/>
            <person name="Qian T."/>
            <person name="Bielawska A."/>
            <person name="Lemasters J.J."/>
            <person name="Hannun Y.A."/>
        </authorList>
    </citation>
    <scope>NUCLEOTIDE SEQUENCE [MRNA] OF 20-780 (ISOFORM 1)</scope>
    <scope>FUNCTION</scope>
    <scope>CATALYTIC ACTIVITY</scope>
    <scope>BIOPHYSICOCHEMICAL PROPERTIES</scope>
    <scope>ACTIVITY REGULATION</scope>
    <scope>SUBCELLULAR LOCATION</scope>
    <scope>TISSUE SPECIFICITY</scope>
</reference>
<reference key="5">
    <citation type="journal article" date="2001" name="J. Biol. Chem.">
        <title>Biochemical characterization of the reverse activity of rat brain ceramidase. A CoA-independent and fumonisin B1-insensitive ceramide synthase.</title>
        <authorList>
            <person name="El Bawab S."/>
            <person name="Birbes H."/>
            <person name="Roddy P."/>
            <person name="Szulc Z.M."/>
            <person name="Bielawska A."/>
            <person name="Hannun Y.A."/>
        </authorList>
    </citation>
    <scope>FUNCTION</scope>
    <scope>CATALYTIC ACTIVITY</scope>
</reference>
<reference key="6">
    <citation type="journal article" date="2004" name="Genome Res.">
        <title>The status, quality, and expansion of the NIH full-length cDNA project: the Mammalian Gene Collection (MGC).</title>
        <authorList>
            <consortium name="The MGC Project Team"/>
        </authorList>
    </citation>
    <scope>NUCLEOTIDE SEQUENCE [LARGE SCALE MRNA] OF 20-780 (ISOFORM 2)</scope>
</reference>
<reference key="7">
    <citation type="journal article" date="2005" name="Biochem. Biophys. Res. Commun.">
        <title>Subcellular localization of human neutral ceramidase expressed in HEK293 cells.</title>
        <authorList>
            <person name="Hwang Y.H."/>
            <person name="Tani M."/>
            <person name="Nakagawa T."/>
            <person name="Okino N."/>
            <person name="Ito M."/>
        </authorList>
    </citation>
    <scope>SUBCELLULAR LOCATION</scope>
    <scope>GLYCOSYLATION</scope>
</reference>
<reference key="8">
    <citation type="journal article" date="2005" name="J. Lipid Res.">
        <title>Mechanisms of sphingosine and sphingosine 1-phosphate generation in human platelets.</title>
        <authorList>
            <person name="Tani M."/>
            <person name="Sano T."/>
            <person name="Ito M."/>
            <person name="Igarashi Y."/>
        </authorList>
    </citation>
    <scope>FUNCTION</scope>
    <scope>CATALYTIC ACTIVITY</scope>
</reference>
<reference key="9">
    <citation type="journal article" date="2006" name="Biochem. J.">
        <title>Identification of a novel amidase motif in neutral ceramidase.</title>
        <authorList>
            <person name="Galadari S."/>
            <person name="Wu B.X."/>
            <person name="Mao C."/>
            <person name="Roddy P."/>
            <person name="El Bawab S."/>
            <person name="Hannun Y.A."/>
        </authorList>
    </citation>
    <scope>FUNCTION</scope>
    <scope>CATALYTIC ACTIVITY</scope>
    <scope>ACTIVITY REGULATION</scope>
    <scope>BIOPHYSICOCHEMICAL PROPERTIES</scope>
    <scope>ACTIVE SITE</scope>
    <scope>MUTAGENESIS OF SER-258; ASP-352; SER-354; CYS-362; SER-374; SER-396; SER-595 AND SER-729</scope>
</reference>
<reference key="10">
    <citation type="journal article" date="2007" name="Biochimie">
        <title>Purification and characterization of human intestinal neutral ceramidase.</title>
        <authorList>
            <person name="Ohlsson L."/>
            <person name="Palmberg C."/>
            <person name="Duan R.D."/>
            <person name="Olsson M."/>
            <person name="Bergman T."/>
            <person name="Nilsson A."/>
        </authorList>
    </citation>
    <scope>FUNCTION</scope>
    <scope>CATALYTIC ACTIVITY</scope>
    <scope>ACTIVITY REGULATION</scope>
    <scope>BIOPHYSICOCHEMICAL PROPERTIES</scope>
</reference>
<reference key="11">
    <citation type="journal article" date="2007" name="Neurogenetics">
        <title>A novel gene derived from a segmental duplication shows perturbed expression in Alzheimer's disease.</title>
        <authorList>
            <person name="Avramopoulos D."/>
            <person name="Wang R."/>
            <person name="Valle D."/>
            <person name="Fallin M.D."/>
            <person name="Bassett S.S."/>
        </authorList>
    </citation>
    <scope>TISSUE SPECIFICITY</scope>
</reference>
<reference key="12">
    <citation type="journal article" date="2009" name="Biochim. Biophys. Acta">
        <title>Downregulation of neutral ceramidase by gemcitabine: Implications for cell cycle regulation.</title>
        <authorList>
            <person name="Wu B.X."/>
            <person name="Zeidan Y.H."/>
            <person name="Hannun Y.A."/>
        </authorList>
    </citation>
    <scope>FUNCTION</scope>
    <scope>CATALYTIC ACTIVITY</scope>
    <scope>PATHWAY</scope>
    <scope>INDUCTION BY GEMCITABINE</scope>
</reference>
<reference key="13">
    <citation type="journal article" date="2014" name="FEBS J.">
        <title>Low-dose cytokine-induced neutral ceramidase secretion from INS-1 cells via exosomes and its anti-apoptotic effect.</title>
        <authorList>
            <person name="Zhu Q."/>
            <person name="Kang J."/>
            <person name="Miao H."/>
            <person name="Feng Y."/>
            <person name="Xiao L."/>
            <person name="Hu Z."/>
            <person name="Liao D.F."/>
            <person name="Huang Y."/>
            <person name="Jin J."/>
            <person name="He S."/>
        </authorList>
    </citation>
    <scope>FUNCTION</scope>
    <scope>SUBCELLULAR LOCATION</scope>
</reference>
<reference key="14">
    <citation type="journal article" date="2018" name="J. Lipid Res.">
        <title>Functions of neutral ceramidase in the Golgi apparatus.</title>
        <authorList>
            <person name="Sakamoto W."/>
            <person name="Coant N."/>
            <person name="Canals D."/>
            <person name="Obeid L.M."/>
            <person name="Hannun Y.A."/>
        </authorList>
    </citation>
    <scope>CATALYTIC ACTIVITY</scope>
    <scope>SUBCELLULAR LOCATION</scope>
</reference>
<reference evidence="22" key="15">
    <citation type="journal article" date="2015" name="Structure">
        <title>Structural Basis for Ceramide Recognition and Hydrolysis by Human Neutral Ceramidase.</title>
        <authorList>
            <person name="Airola M.V."/>
            <person name="Allen W.J."/>
            <person name="Pulkoski-Gross M.J."/>
            <person name="Obeid L.M."/>
            <person name="Rizzo R.C."/>
            <person name="Hannun Y.A."/>
        </authorList>
    </citation>
    <scope>X-RAY CRYSTALLOGRAPHY (2.58 ANGSTROMS) OF 99-780 IN COMPLEX WITH CALCIUM; ZINC AND PHOSPHATE</scope>
    <scope>CATALYTIC ACTIVITY</scope>
    <scope>FUNCTION</scope>
    <scope>COFACTOR</scope>
    <scope>GLYCOSYLATION AT ASN-151; ASN-217; ASN-308; ASN-440 AND ASN-730</scope>
    <scope>DISULFIDE BONDS</scope>
    <scope>MUTAGENESIS OF GLY-124; HIS-194; HIS-196; ALA-211; ARG-257; HIS-303; GLY-465; GLU-540; TYR-579 AND TYR-591</scope>
</reference>
<protein>
    <recommendedName>
        <fullName evidence="18">Neutral ceramidase</fullName>
        <shortName>N-CDase</shortName>
        <shortName>NCDase</shortName>
        <ecNumber evidence="2">3.5.1.-</ecNumber>
        <ecNumber evidence="5 6 8 9 13 15">3.5.1.23</ecNumber>
    </recommendedName>
    <alternativeName>
        <fullName>Acylsphingosine deacylase 2</fullName>
    </alternativeName>
    <alternativeName>
        <fullName>BCDase</fullName>
    </alternativeName>
    <alternativeName>
        <fullName>LCDase</fullName>
        <shortName>hCD</shortName>
    </alternativeName>
    <alternativeName>
        <fullName>N-acylsphingosine amidohydrolase 2</fullName>
    </alternativeName>
    <alternativeName>
        <fullName>Non-lysosomal ceramidase</fullName>
    </alternativeName>
    <component>
        <recommendedName>
            <fullName evidence="1">Neutral ceramidase soluble form</fullName>
        </recommendedName>
    </component>
</protein>
<feature type="chain" id="PRO_0000247099" description="Neutral ceramidase">
    <location>
        <begin position="1"/>
        <end position="780"/>
    </location>
</feature>
<feature type="chain" id="PRO_0000247100" description="Neutral ceramidase soluble form" evidence="1">
    <location>
        <begin position="99"/>
        <end position="780"/>
    </location>
</feature>
<feature type="topological domain" description="Cytoplasmic" evidence="3">
    <location>
        <begin position="1"/>
        <end position="12"/>
    </location>
</feature>
<feature type="transmembrane region" description="Helical; Signal-anchor for type II membrane protein" evidence="3">
    <location>
        <begin position="13"/>
        <end position="33"/>
    </location>
</feature>
<feature type="topological domain" description="Lumenal" evidence="3">
    <location>
        <begin position="34"/>
        <end position="780"/>
    </location>
</feature>
<feature type="region of interest" description="Disordered" evidence="4">
    <location>
        <begin position="47"/>
        <end position="90"/>
    </location>
</feature>
<feature type="region of interest" description="Required for correct folding and localization" evidence="1">
    <location>
        <begin position="770"/>
        <end position="780"/>
    </location>
</feature>
<feature type="compositionally biased region" description="Low complexity" evidence="4">
    <location>
        <begin position="57"/>
        <end position="85"/>
    </location>
</feature>
<feature type="active site" description="Nucleophile" evidence="10">
    <location>
        <position position="354"/>
    </location>
</feature>
<feature type="binding site" evidence="15 22">
    <location>
        <position position="134"/>
    </location>
    <ligand>
        <name>Ca(2+)</name>
        <dbReference type="ChEBI" id="CHEBI:29108"/>
    </ligand>
</feature>
<feature type="binding site" evidence="15 22">
    <location>
        <position position="194"/>
    </location>
    <ligand>
        <name>Zn(2+)</name>
        <dbReference type="ChEBI" id="CHEBI:29105"/>
    </ligand>
</feature>
<feature type="binding site" evidence="15 22">
    <location>
        <position position="303"/>
    </location>
    <ligand>
        <name>Zn(2+)</name>
        <dbReference type="ChEBI" id="CHEBI:29105"/>
    </ligand>
</feature>
<feature type="binding site" evidence="15 22">
    <location>
        <position position="540"/>
    </location>
    <ligand>
        <name>Zn(2+)</name>
        <dbReference type="ChEBI" id="CHEBI:29105"/>
    </ligand>
</feature>
<feature type="binding site" evidence="15 22">
    <location>
        <position position="579"/>
    </location>
    <ligand>
        <name>Zn(2+)</name>
        <dbReference type="ChEBI" id="CHEBI:29105"/>
    </ligand>
</feature>
<feature type="binding site" evidence="15 22">
    <location>
        <position position="712"/>
    </location>
    <ligand>
        <name>Ca(2+)</name>
        <dbReference type="ChEBI" id="CHEBI:29108"/>
    </ligand>
</feature>
<feature type="binding site" evidence="15 22">
    <location>
        <position position="714"/>
    </location>
    <ligand>
        <name>Ca(2+)</name>
        <dbReference type="ChEBI" id="CHEBI:29108"/>
    </ligand>
</feature>
<feature type="binding site" evidence="15 22">
    <location>
        <position position="717"/>
    </location>
    <ligand>
        <name>Ca(2+)</name>
        <dbReference type="ChEBI" id="CHEBI:29108"/>
    </ligand>
</feature>
<feature type="site" description="Cleavage" evidence="1">
    <location>
        <begin position="98"/>
        <end position="99"/>
    </location>
</feature>
<feature type="glycosylation site" description="O-linked (GalNAc...) threonine" evidence="3">
    <location>
        <position position="62"/>
    </location>
</feature>
<feature type="glycosylation site" description="O-linked (GalNAc...) serine" evidence="3">
    <location>
        <position position="67"/>
    </location>
</feature>
<feature type="glycosylation site" description="O-linked (GalNAc...) threonine" evidence="3">
    <location>
        <position position="68"/>
    </location>
</feature>
<feature type="glycosylation site" description="O-linked (GalNAc...) threonine" evidence="3">
    <location>
        <position position="70"/>
    </location>
</feature>
<feature type="glycosylation site" description="O-linked (GalNAc...) serine" evidence="3">
    <location>
        <position position="73"/>
    </location>
</feature>
<feature type="glycosylation site" description="O-linked (GalNAc...) threonine" evidence="3">
    <location>
        <position position="74"/>
    </location>
</feature>
<feature type="glycosylation site" description="O-linked (GalNAc...) threonine" evidence="3">
    <location>
        <position position="76"/>
    </location>
</feature>
<feature type="glycosylation site" description="O-linked (GalNAc...) serine" evidence="3">
    <location>
        <position position="78"/>
    </location>
</feature>
<feature type="glycosylation site" description="O-linked (GalNAc...) serine" evidence="3">
    <location>
        <position position="79"/>
    </location>
</feature>
<feature type="glycosylation site" description="O-linked (GalNAc...) threonine" evidence="3">
    <location>
        <position position="80"/>
    </location>
</feature>
<feature type="glycosylation site" description="O-linked (GalNAc...) threonine" evidence="3">
    <location>
        <position position="82"/>
    </location>
</feature>
<feature type="glycosylation site" description="O-linked (GalNAc...) threonine" evidence="3">
    <location>
        <position position="84"/>
    </location>
</feature>
<feature type="glycosylation site" description="N-linked (GlcNAc...) asparagine" evidence="3">
    <location>
        <position position="98"/>
    </location>
</feature>
<feature type="glycosylation site" description="N-linked (GlcNAc...) asparagine" evidence="15 22">
    <location>
        <position position="151"/>
    </location>
</feature>
<feature type="glycosylation site" description="N-linked (GlcNAc...) asparagine" evidence="15 22">
    <location>
        <position position="217"/>
    </location>
</feature>
<feature type="glycosylation site" description="N-linked (GlcNAc...) asparagine" evidence="15 22">
    <location>
        <position position="308"/>
    </location>
</feature>
<feature type="glycosylation site" description="N-linked (GlcNAc...) asparagine" evidence="15 22">
    <location>
        <position position="440"/>
    </location>
</feature>
<feature type="glycosylation site" description="N-linked (GlcNAc...) asparagine" evidence="3">
    <location>
        <position position="468"/>
    </location>
</feature>
<feature type="glycosylation site" description="N-linked (GlcNAc...) asparagine" evidence="3">
    <location>
        <position position="564"/>
    </location>
</feature>
<feature type="glycosylation site" description="N-linked (GlcNAc...) asparagine" evidence="15 22">
    <location>
        <position position="730"/>
    </location>
</feature>
<feature type="glycosylation site" description="O-linked (GalNAc...) threonine" evidence="3">
    <location>
        <position position="779"/>
    </location>
</feature>
<feature type="disulfide bond" evidence="15 22">
    <location>
        <begin position="362"/>
        <end position="376"/>
    </location>
</feature>
<feature type="disulfide bond" evidence="15 22">
    <location>
        <begin position="369"/>
        <end position="384"/>
    </location>
</feature>
<feature type="disulfide bond" evidence="15 22">
    <location>
        <begin position="448"/>
        <end position="498"/>
    </location>
</feature>
<feature type="splice variant" id="VSP_019928" description="In isoform 2." evidence="17">
    <location>
        <begin position="410"/>
        <end position="444"/>
    </location>
</feature>
<feature type="sequence variant" id="VAR_027064" description="In dbSNP:rs7067625.">
    <original>T</original>
    <variation>A</variation>
    <location>
        <position position="51"/>
    </location>
</feature>
<feature type="sequence variant" id="VAR_027065" description="In dbSNP:rs1052952953.">
    <original>A</original>
    <variation>S</variation>
    <location>
        <position position="346"/>
    </location>
</feature>
<feature type="mutagenesis site" description="Loss of ceramide hydrolase activity." evidence="15">
    <original>G</original>
    <variation>R</variation>
    <location>
        <position position="124"/>
    </location>
</feature>
<feature type="mutagenesis site" description="Loss of ceramide hydrolase activity." evidence="15">
    <original>H</original>
    <variation>A</variation>
    <location>
        <position position="194"/>
    </location>
</feature>
<feature type="mutagenesis site" description="Loss of ceramide hydrolase activity." evidence="15">
    <original>H</original>
    <variation>A</variation>
    <location>
        <position position="196"/>
    </location>
</feature>
<feature type="mutagenesis site" description="Loss of ceramide hydrolase activity." evidence="15">
    <original>A</original>
    <variation>R</variation>
    <location>
        <position position="211"/>
    </location>
</feature>
<feature type="mutagenesis site" description="Loss of ceramide hydrolase activity." evidence="15">
    <original>R</original>
    <variation>A</variation>
    <location>
        <position position="257"/>
    </location>
</feature>
<feature type="mutagenesis site" description="Decreased ceramide hydrolase activity." evidence="10">
    <original>S</original>
    <variation>A</variation>
    <location>
        <position position="258"/>
    </location>
</feature>
<feature type="mutagenesis site" description="Loss of ceramide hydrolase activity." evidence="15">
    <original>H</original>
    <variation>A</variation>
    <location>
        <position position="303"/>
    </location>
</feature>
<feature type="mutagenesis site" description="Loss of ceramide hydrolase activity." evidence="10">
    <original>D</original>
    <variation>S</variation>
    <location>
        <position position="352"/>
    </location>
</feature>
<feature type="mutagenesis site" description="Loss of ceramide hydrolase activity." evidence="10">
    <original>S</original>
    <variation>A</variation>
    <location>
        <position position="354"/>
    </location>
</feature>
<feature type="mutagenesis site" description="Loss of ceramide hydrolase activity." evidence="10">
    <original>C</original>
    <variation>A</variation>
    <location>
        <position position="362"/>
    </location>
</feature>
<feature type="mutagenesis site" description="Decreased ceramide hydrolase activity." evidence="10">
    <original>S</original>
    <variation>A</variation>
    <location>
        <position position="374"/>
    </location>
</feature>
<feature type="mutagenesis site" description="No effect on ceramide hydrolase activity." evidence="10">
    <original>S</original>
    <variation>A</variation>
    <location>
        <position position="396"/>
    </location>
</feature>
<feature type="mutagenesis site" description="Loss of ceramide hydrolase activity." evidence="15">
    <original>G</original>
    <variation>R</variation>
    <location>
        <position position="465"/>
    </location>
</feature>
<feature type="mutagenesis site" description="Loss of ceramide hydrolase activity." evidence="15">
    <original>E</original>
    <variation>A</variation>
    <location>
        <position position="540"/>
    </location>
</feature>
<feature type="mutagenesis site" description="Loss of ceramide hydrolase activity." evidence="15">
    <original>Y</original>
    <variation>F</variation>
    <location>
        <position position="579"/>
    </location>
</feature>
<feature type="mutagenesis site" description="Loss of ceramide hydrolase activity." evidence="15">
    <original>Y</original>
    <variation>F</variation>
    <location>
        <position position="591"/>
    </location>
</feature>
<feature type="mutagenesis site" description="Decreased ceramide hydrolase activity." evidence="10">
    <original>S</original>
    <variation>A</variation>
    <location>
        <position position="595"/>
    </location>
</feature>
<feature type="mutagenesis site" description="Decreased ceramide hydrolase activity." evidence="10">
    <original>S</original>
    <variation>A</variation>
    <location>
        <position position="729"/>
    </location>
</feature>
<feature type="sequence conflict" description="In Ref. 1; AAL06061 and 4; AAF86240." evidence="18" ref="1 4">
    <original>S</original>
    <variation>P</variation>
    <location>
        <position position="274"/>
    </location>
</feature>
<feature type="sequence conflict" description="In Ref. 1; AAL06061 and 4; AAF86240." evidence="18" ref="1 4">
    <original>T</original>
    <variation>A</variation>
    <location>
        <position position="602"/>
    </location>
</feature>
<feature type="sequence conflict" description="In Ref. 3; CAI17190." evidence="18" ref="3">
    <original>T</original>
    <variation>N</variation>
    <location>
        <position position="689"/>
    </location>
</feature>
<feature type="strand" evidence="23">
    <location>
        <begin position="102"/>
        <end position="110"/>
    </location>
</feature>
<feature type="strand" evidence="23">
    <location>
        <begin position="115"/>
        <end position="123"/>
    </location>
</feature>
<feature type="strand" evidence="23">
    <location>
        <begin position="129"/>
        <end position="135"/>
    </location>
</feature>
<feature type="strand" evidence="23">
    <location>
        <begin position="138"/>
        <end position="145"/>
    </location>
</feature>
<feature type="strand" evidence="23">
    <location>
        <begin position="153"/>
        <end position="161"/>
    </location>
</feature>
<feature type="helix" evidence="23">
    <location>
        <begin position="165"/>
        <end position="179"/>
    </location>
</feature>
<feature type="strand" evidence="23">
    <location>
        <begin position="185"/>
        <end position="192"/>
    </location>
</feature>
<feature type="strand" evidence="23">
    <location>
        <begin position="196"/>
        <end position="199"/>
    </location>
</feature>
<feature type="helix" evidence="23">
    <location>
        <begin position="206"/>
        <end position="212"/>
    </location>
</feature>
<feature type="helix" evidence="23">
    <location>
        <begin position="217"/>
        <end position="235"/>
    </location>
</feature>
<feature type="strand" evidence="23">
    <location>
        <begin position="239"/>
        <end position="249"/>
    </location>
</feature>
<feature type="strand" evidence="23">
    <location>
        <begin position="255"/>
        <end position="257"/>
    </location>
</feature>
<feature type="helix" evidence="23">
    <location>
        <begin position="259"/>
        <end position="262"/>
    </location>
</feature>
<feature type="helix" evidence="23">
    <location>
        <begin position="267"/>
        <end position="270"/>
    </location>
</feature>
<feature type="strand" evidence="23">
    <location>
        <begin position="280"/>
        <end position="288"/>
    </location>
</feature>
<feature type="strand" evidence="23">
    <location>
        <begin position="293"/>
        <end position="299"/>
    </location>
</feature>
<feature type="helix" evidence="23">
    <location>
        <begin position="317"/>
        <end position="330"/>
    </location>
</feature>
<feature type="strand" evidence="23">
    <location>
        <begin position="342"/>
        <end position="346"/>
    </location>
</feature>
<feature type="strand" evidence="23">
    <location>
        <begin position="353"/>
        <end position="355"/>
    </location>
</feature>
<feature type="strand" evidence="23">
    <location>
        <begin position="360"/>
        <end position="362"/>
    </location>
</feature>
<feature type="turn" evidence="23">
    <location>
        <begin position="363"/>
        <end position="365"/>
    </location>
</feature>
<feature type="turn" evidence="23">
    <location>
        <begin position="377"/>
        <end position="379"/>
    </location>
</feature>
<feature type="helix" evidence="23">
    <location>
        <begin position="380"/>
        <end position="383"/>
    </location>
</feature>
<feature type="strand" evidence="23">
    <location>
        <begin position="384"/>
        <end position="386"/>
    </location>
</feature>
<feature type="strand" evidence="23">
    <location>
        <begin position="389"/>
        <end position="392"/>
    </location>
</feature>
<feature type="helix" evidence="23">
    <location>
        <begin position="393"/>
        <end position="413"/>
    </location>
</feature>
<feature type="strand" evidence="23">
    <location>
        <begin position="417"/>
        <end position="419"/>
    </location>
</feature>
<feature type="strand" evidence="23">
    <location>
        <begin position="423"/>
        <end position="431"/>
    </location>
</feature>
<feature type="strand" evidence="23">
    <location>
        <begin position="436"/>
        <end position="442"/>
    </location>
</feature>
<feature type="strand" evidence="23">
    <location>
        <begin position="444"/>
        <end position="446"/>
    </location>
</feature>
<feature type="helix" evidence="23">
    <location>
        <begin position="454"/>
        <end position="458"/>
    </location>
</feature>
<feature type="helix" evidence="23">
    <location>
        <begin position="478"/>
        <end position="487"/>
    </location>
</feature>
<feature type="helix" evidence="23">
    <location>
        <begin position="493"/>
        <end position="499"/>
    </location>
</feature>
<feature type="strand" evidence="23">
    <location>
        <begin position="504"/>
        <end position="506"/>
    </location>
</feature>
<feature type="helix" evidence="23">
    <location>
        <begin position="508"/>
        <end position="510"/>
    </location>
</feature>
<feature type="strand" evidence="23">
    <location>
        <begin position="513"/>
        <end position="515"/>
    </location>
</feature>
<feature type="strand" evidence="23">
    <location>
        <begin position="520"/>
        <end position="529"/>
    </location>
</feature>
<feature type="strand" evidence="23">
    <location>
        <begin position="532"/>
        <end position="536"/>
    </location>
</feature>
<feature type="strand" evidence="23">
    <location>
        <begin position="538"/>
        <end position="541"/>
    </location>
</feature>
<feature type="helix" evidence="23">
    <location>
        <begin position="543"/>
        <end position="559"/>
    </location>
</feature>
<feature type="strand" evidence="23">
    <location>
        <begin position="566"/>
        <end position="570"/>
    </location>
</feature>
<feature type="strand" evidence="23">
    <location>
        <begin position="572"/>
        <end position="575"/>
    </location>
</feature>
<feature type="strand" evidence="23">
    <location>
        <begin position="578"/>
        <end position="580"/>
    </location>
</feature>
<feature type="helix" evidence="23">
    <location>
        <begin position="583"/>
        <end position="588"/>
    </location>
</feature>
<feature type="helix" evidence="23">
    <location>
        <begin position="591"/>
        <end position="594"/>
    </location>
</feature>
<feature type="helix" evidence="23">
    <location>
        <begin position="602"/>
        <end position="618"/>
    </location>
</feature>
<feature type="helix" evidence="23">
    <location>
        <begin position="622"/>
        <end position="624"/>
    </location>
</feature>
<feature type="strand" evidence="23">
    <location>
        <begin position="658"/>
        <end position="660"/>
    </location>
</feature>
<feature type="strand" evidence="23">
    <location>
        <begin position="664"/>
        <end position="667"/>
    </location>
</feature>
<feature type="strand" evidence="23">
    <location>
        <begin position="670"/>
        <end position="677"/>
    </location>
</feature>
<feature type="helix" evidence="23">
    <location>
        <begin position="681"/>
        <end position="684"/>
    </location>
</feature>
<feature type="strand" evidence="23">
    <location>
        <begin position="693"/>
        <end position="700"/>
    </location>
</feature>
<feature type="turn" evidence="23">
    <location>
        <begin position="701"/>
        <end position="704"/>
    </location>
</feature>
<feature type="strand" evidence="23">
    <location>
        <begin position="705"/>
        <end position="711"/>
    </location>
</feature>
<feature type="strand" evidence="23">
    <location>
        <begin position="717"/>
        <end position="723"/>
    </location>
</feature>
<feature type="strand" evidence="23">
    <location>
        <begin position="729"/>
        <end position="736"/>
    </location>
</feature>
<feature type="strand" evidence="23">
    <location>
        <begin position="744"/>
        <end position="756"/>
    </location>
</feature>
<feature type="strand" evidence="23">
    <location>
        <begin position="764"/>
        <end position="771"/>
    </location>
</feature>
<feature type="strand" evidence="23">
    <location>
        <begin position="775"/>
        <end position="779"/>
    </location>
</feature>
<evidence type="ECO:0000250" key="1">
    <source>
        <dbReference type="UniProtKB" id="Q91XT9"/>
    </source>
</evidence>
<evidence type="ECO:0000250" key="2">
    <source>
        <dbReference type="UniProtKB" id="Q9JHE3"/>
    </source>
</evidence>
<evidence type="ECO:0000255" key="3"/>
<evidence type="ECO:0000256" key="4">
    <source>
        <dbReference type="SAM" id="MobiDB-lite"/>
    </source>
</evidence>
<evidence type="ECO:0000269" key="5">
    <source>
    </source>
</evidence>
<evidence type="ECO:0000269" key="6">
    <source>
    </source>
</evidence>
<evidence type="ECO:0000269" key="7">
    <source>
    </source>
</evidence>
<evidence type="ECO:0000269" key="8">
    <source>
    </source>
</evidence>
<evidence type="ECO:0000269" key="9">
    <source>
    </source>
</evidence>
<evidence type="ECO:0000269" key="10">
    <source>
    </source>
</evidence>
<evidence type="ECO:0000269" key="11">
    <source>
    </source>
</evidence>
<evidence type="ECO:0000269" key="12">
    <source>
    </source>
</evidence>
<evidence type="ECO:0000269" key="13">
    <source>
    </source>
</evidence>
<evidence type="ECO:0000269" key="14">
    <source>
    </source>
</evidence>
<evidence type="ECO:0000269" key="15">
    <source>
    </source>
</evidence>
<evidence type="ECO:0000269" key="16">
    <source>
    </source>
</evidence>
<evidence type="ECO:0000303" key="17">
    <source>
    </source>
</evidence>
<evidence type="ECO:0000305" key="18"/>
<evidence type="ECO:0000305" key="19">
    <source>
    </source>
</evidence>
<evidence type="ECO:0000305" key="20">
    <source>
    </source>
</evidence>
<evidence type="ECO:0000305" key="21">
    <source>
    </source>
</evidence>
<evidence type="ECO:0007744" key="22">
    <source>
        <dbReference type="PDB" id="4WGK"/>
    </source>
</evidence>
<evidence type="ECO:0007829" key="23">
    <source>
        <dbReference type="PDB" id="4WGK"/>
    </source>
</evidence>
<comment type="function">
    <text evidence="2 5 6 8 9 10 12 13 14 15">Plasma membrane ceramidase that hydrolyzes sphingolipid ceramides into sphingosine and free fatty acids at neutral pH (PubMed:10781606, PubMed:16229686, PubMed:26190575). Ceramides, sphingosine, and its phosphorylated form sphingosine-1-phosphate are bioactive lipids that mediate cellular signaling pathways regulating several biological processes including cell proliferation, apoptosis and differentiation (PubMed:15946935, PubMed:19345744, PubMed:24798654). Also catalyzes the reverse reaction allowing the synthesis of ceramides from fatty acids and sphingosine (PubMed:11278489, PubMed:17475390). Together with sphingomyelinase, participates in the production of sphingosine and sphingosine-1-phosphate from the degradation of sphingomyelin, a sphingolipid enriched in the plasma membrane of cells (PubMed:16061940). Also participates in the hydrolysis of ceramides from the extracellular milieu allowing the production of sphingosine-1-phosphate inside and outside cells (By similarity). This is the case for instance with the digestion of dietary sphingolipids in the intestinal tract (By similarity).</text>
</comment>
<comment type="catalytic activity">
    <reaction evidence="5 6 8 9 13 15">
        <text>an N-acylsphing-4-enine + H2O = sphing-4-enine + a fatty acid</text>
        <dbReference type="Rhea" id="RHEA:20856"/>
        <dbReference type="ChEBI" id="CHEBI:15377"/>
        <dbReference type="ChEBI" id="CHEBI:28868"/>
        <dbReference type="ChEBI" id="CHEBI:52639"/>
        <dbReference type="ChEBI" id="CHEBI:57756"/>
        <dbReference type="EC" id="3.5.1.23"/>
    </reaction>
    <physiologicalReaction direction="left-to-right" evidence="2">
        <dbReference type="Rhea" id="RHEA:20857"/>
    </physiologicalReaction>
</comment>
<comment type="catalytic activity">
    <reaction evidence="10 16">
        <text>N-dodecanoylsphing-4-enine + H2O = dodecanoate + sphing-4-enine</text>
        <dbReference type="Rhea" id="RHEA:41291"/>
        <dbReference type="ChEBI" id="CHEBI:15377"/>
        <dbReference type="ChEBI" id="CHEBI:18262"/>
        <dbReference type="ChEBI" id="CHEBI:57756"/>
        <dbReference type="ChEBI" id="CHEBI:72956"/>
    </reaction>
    <physiologicalReaction direction="left-to-right" evidence="20">
        <dbReference type="Rhea" id="RHEA:41292"/>
    </physiologicalReaction>
    <physiologicalReaction direction="right-to-left" evidence="2">
        <dbReference type="Rhea" id="RHEA:41293"/>
    </physiologicalReaction>
</comment>
<comment type="catalytic activity">
    <reaction evidence="5 12">
        <text>N-hexadecanoylsphing-4-enine + H2O = sphing-4-enine + hexadecanoate</text>
        <dbReference type="Rhea" id="RHEA:38891"/>
        <dbReference type="ChEBI" id="CHEBI:7896"/>
        <dbReference type="ChEBI" id="CHEBI:15377"/>
        <dbReference type="ChEBI" id="CHEBI:57756"/>
        <dbReference type="ChEBI" id="CHEBI:72959"/>
    </reaction>
    <physiologicalReaction direction="left-to-right" evidence="19">
        <dbReference type="Rhea" id="RHEA:38892"/>
    </physiologicalReaction>
    <physiologicalReaction direction="right-to-left" evidence="21">
        <dbReference type="Rhea" id="RHEA:38893"/>
    </physiologicalReaction>
</comment>
<comment type="catalytic activity">
    <reaction evidence="12">
        <text>N-octanoylsphing-4-enine + H2O = octanoate + sphing-4-enine</text>
        <dbReference type="Rhea" id="RHEA:45092"/>
        <dbReference type="ChEBI" id="CHEBI:15377"/>
        <dbReference type="ChEBI" id="CHEBI:25646"/>
        <dbReference type="ChEBI" id="CHEBI:45815"/>
        <dbReference type="ChEBI" id="CHEBI:57756"/>
    </reaction>
    <physiologicalReaction direction="left-to-right" evidence="21">
        <dbReference type="Rhea" id="RHEA:45093"/>
    </physiologicalReaction>
</comment>
<comment type="catalytic activity">
    <reaction evidence="8 16">
        <text>N-(hexanoyl)sphing-4-enine + H2O = hexanoate + sphing-4-enine</text>
        <dbReference type="Rhea" id="RHEA:41295"/>
        <dbReference type="ChEBI" id="CHEBI:15377"/>
        <dbReference type="ChEBI" id="CHEBI:17120"/>
        <dbReference type="ChEBI" id="CHEBI:57756"/>
        <dbReference type="ChEBI" id="CHEBI:63867"/>
    </reaction>
    <physiologicalReaction direction="left-to-right" evidence="8 16">
        <dbReference type="Rhea" id="RHEA:41296"/>
    </physiologicalReaction>
</comment>
<comment type="catalytic activity">
    <reaction evidence="8">
        <text>N-octadecanoylsphing-4-enine + H2O = sphing-4-enine + octadecanoate</text>
        <dbReference type="Rhea" id="RHEA:41279"/>
        <dbReference type="ChEBI" id="CHEBI:15377"/>
        <dbReference type="ChEBI" id="CHEBI:25629"/>
        <dbReference type="ChEBI" id="CHEBI:57756"/>
        <dbReference type="ChEBI" id="CHEBI:72961"/>
    </reaction>
    <physiologicalReaction direction="left-to-right" evidence="8">
        <dbReference type="Rhea" id="RHEA:41280"/>
    </physiologicalReaction>
</comment>
<comment type="catalytic activity">
    <reaction evidence="1">
        <text>N-tetradecanoylsphing-4-enine + H2O = tetradecanoate + sphing-4-enine</text>
        <dbReference type="Rhea" id="RHEA:41287"/>
        <dbReference type="ChEBI" id="CHEBI:15377"/>
        <dbReference type="ChEBI" id="CHEBI:30807"/>
        <dbReference type="ChEBI" id="CHEBI:57756"/>
        <dbReference type="ChEBI" id="CHEBI:72957"/>
    </reaction>
    <physiologicalReaction direction="right-to-left" evidence="1">
        <dbReference type="Rhea" id="RHEA:41289"/>
    </physiologicalReaction>
</comment>
<comment type="catalytic activity">
    <reaction evidence="8">
        <text>N-(9Z-octadecenoyl)-sphing-4-enine + H2O = sphing-4-enine + (9Z)-octadecenoate</text>
        <dbReference type="Rhea" id="RHEA:41299"/>
        <dbReference type="ChEBI" id="CHEBI:15377"/>
        <dbReference type="ChEBI" id="CHEBI:30823"/>
        <dbReference type="ChEBI" id="CHEBI:57756"/>
        <dbReference type="ChEBI" id="CHEBI:77996"/>
    </reaction>
    <physiologicalReaction direction="left-to-right" evidence="8">
        <dbReference type="Rhea" id="RHEA:41300"/>
    </physiologicalReaction>
    <physiologicalReaction direction="right-to-left" evidence="1">
        <dbReference type="Rhea" id="RHEA:41301"/>
    </physiologicalReaction>
</comment>
<comment type="catalytic activity">
    <reaction evidence="1">
        <text>N-(15Z-tetracosenoyl)-sphing-4-enine + H2O = (15Z)-tetracosenoate + sphing-4-enine</text>
        <dbReference type="Rhea" id="RHEA:41267"/>
        <dbReference type="ChEBI" id="CHEBI:15377"/>
        <dbReference type="ChEBI" id="CHEBI:32392"/>
        <dbReference type="ChEBI" id="CHEBI:57756"/>
        <dbReference type="ChEBI" id="CHEBI:74450"/>
    </reaction>
    <physiologicalReaction direction="right-to-left" evidence="1">
        <dbReference type="Rhea" id="RHEA:41269"/>
    </physiologicalReaction>
</comment>
<comment type="catalytic activity">
    <reaction evidence="2">
        <text>sphinganine + hexadecanoate = N-hexadecanoylsphinganine + H2O</text>
        <dbReference type="Rhea" id="RHEA:43440"/>
        <dbReference type="ChEBI" id="CHEBI:7896"/>
        <dbReference type="ChEBI" id="CHEBI:15377"/>
        <dbReference type="ChEBI" id="CHEBI:57817"/>
        <dbReference type="ChEBI" id="CHEBI:67042"/>
    </reaction>
    <physiologicalReaction direction="right-to-left" evidence="2">
        <dbReference type="Rhea" id="RHEA:43442"/>
    </physiologicalReaction>
</comment>
<comment type="catalytic activity">
    <reaction evidence="2">
        <text>N-(octadecanoyl)-sphinganine + H2O = sphinganine + octadecanoate</text>
        <dbReference type="Rhea" id="RHEA:45008"/>
        <dbReference type="ChEBI" id="CHEBI:15377"/>
        <dbReference type="ChEBI" id="CHEBI:25629"/>
        <dbReference type="ChEBI" id="CHEBI:57817"/>
        <dbReference type="ChEBI" id="CHEBI:67033"/>
    </reaction>
    <physiologicalReaction direction="left-to-right" evidence="2">
        <dbReference type="Rhea" id="RHEA:45009"/>
    </physiologicalReaction>
</comment>
<comment type="cofactor">
    <cofactor evidence="15">
        <name>Zn(2+)</name>
        <dbReference type="ChEBI" id="CHEBI:29105"/>
    </cofactor>
    <text evidence="15">Binds 1 zinc ion per subunit.</text>
</comment>
<comment type="activity regulation">
    <text evidence="5 10 12">Inhibited by dithiothreitol (DTT) and 2-mercaptoethanol (PubMed:16229686). Activity is mildly stimulated by Ca(2+) and Mg(2+), but is not inhibited by EDTA (PubMed:10781606, PubMed:16229686). Activity is inhibited by millimolar levels of Fe(2+), Zn(2+) and Cu(2+) (PubMed:16229686, PubMed:17475390). Inhibited by cholesterol (PubMed:17475390).</text>
</comment>
<comment type="biophysicochemical properties">
    <kinetics>
        <KM evidence="10">60.1 uM for D-erythro-C12-NBD-ceramide (at 37 degrees Celsius and pH 7.5)</KM>
        <KM evidence="12">13 uM for N-octanoylsphing-4-enine (at 37 degrees Celsius and pH 7.0)</KM>
        <Vmax evidence="10">0.68 nmol/min/mg enzyme for the hydrolysis of D-erythro-C12-NBD-ceramide as substrate (at 37 degrees Celsius and pH 7.5)</Vmax>
        <Vmax evidence="12">0.8 umol/min/mg enzyme for the hydrolysis of N-octanoylsphing-4-enine (at 37 degrees Celsius and pH 7.0)</Vmax>
    </kinetics>
    <phDependence>
        <text evidence="5 10 12">Optimum pH is 7.5-9.5 for N-hexadecanoylsphing-4-enine (PubMed:10781606). Optimum pH is 7.5 for D-erythro-C12-NBD-ceramide (PubMed:16229686). Optimum pH is 7.5 for N-octanoylsphing-4-enine (PubMed:17475390).</text>
    </phDependence>
</comment>
<comment type="pathway">
    <text evidence="8 13">Lipid metabolism; sphingolipid metabolism.</text>
</comment>
<comment type="subcellular location">
    <molecule>Neutral ceramidase</molecule>
    <subcellularLocation>
        <location evidence="7">Cell membrane</location>
        <topology evidence="1">Single-pass type II membrane protein</topology>
    </subcellularLocation>
    <subcellularLocation>
        <location evidence="2">Membrane raft</location>
        <topology evidence="1">Single-pass type II membrane protein</topology>
    </subcellularLocation>
    <subcellularLocation>
        <location evidence="2">Membrane</location>
        <location evidence="2">Caveola</location>
        <topology evidence="1">Single-pass type II membrane protein</topology>
    </subcellularLocation>
    <subcellularLocation>
        <location evidence="16">Golgi apparatus membrane</location>
        <topology evidence="1">Single-pass type II membrane protein</topology>
    </subcellularLocation>
    <subcellularLocation>
        <location evidence="5">Mitochondrion</location>
    </subcellularLocation>
    <subcellularLocation>
        <location evidence="14">Secreted</location>
        <location evidence="14">Extracellular exosome</location>
    </subcellularLocation>
    <text evidence="2 7 14">Enriched in exosomes upon stimulation by cytokine (PubMed:24798654). Enriched in caveolae and lipid rafts (By similarity). The localization to the mitochondrion could not be confirmed (PubMed:15845354).</text>
</comment>
<comment type="subcellular location">
    <molecule>Neutral ceramidase soluble form</molecule>
    <subcellularLocation>
        <location evidence="1">Secreted</location>
    </subcellularLocation>
</comment>
<comment type="alternative products">
    <event type="alternative splicing"/>
    <isoform>
        <id>Q9NR71-1</id>
        <name>1</name>
        <sequence type="displayed"/>
    </isoform>
    <isoform>
        <id>Q9NR71-2</id>
        <name>2</name>
        <sequence type="described" ref="VSP_019928"/>
    </isoform>
</comment>
<comment type="tissue specificity">
    <text evidence="5 11">Primarily expressed in intestine (PubMed:17334805). Ubiquitously expressed with higher levels in kidney, skeletal muscle and heart (PubMed:10781606). The ubiquitous expression observed for ASAH2 might be an experimental artifact due to the paralog ASAH2B (PubMed:17334805).</text>
</comment>
<comment type="induction">
    <text evidence="13">Down-regulated by gemcitabine/GMZ (at protein level) (PubMed:19345744). Down-regulated upon serum starvation (PubMed:19345744).</text>
</comment>
<comment type="PTM">
    <text evidence="1">Proteolytic cleavage of the N-terminus removes the signal-anchor and produces a soluble form of the protein.</text>
</comment>
<comment type="PTM">
    <text evidence="2">N-glycosylated. Required for enzyme activity.</text>
</comment>
<comment type="PTM">
    <text evidence="7">O-glycosylated. Required to retain it as a type II membrane protein at the cell surface.</text>
</comment>
<comment type="PTM">
    <text evidence="1">Phosphorylated. May prevent ubiquitination and subsequent degradation.</text>
</comment>
<comment type="PTM">
    <text evidence="1">Ubiquitinated, leading to its degradation by the proteasome. Ubiquitination is triggered by nitric oxide.</text>
</comment>
<comment type="similarity">
    <text evidence="18">Belongs to the neutral ceramidase family.</text>
</comment>
<comment type="caution">
    <text evidence="5 7 18">Was proposed to be mitochondrial, based on experiments with an N-terminal GFP-tag (PubMed:10781606). The in vivo localization to the mitochondrion could not be confirmed (PubMed:15845354). However, it has been observed for the mouse (AC Q9JHE3) and rat (AC Q91XT9) orthologs.</text>
</comment>
<comment type="sequence caution" evidence="18">
    <conflict type="erroneous initiation">
        <sequence resource="EMBL-CDS" id="AAL06061"/>
    </conflict>
    <text>Truncated N-terminus.</text>
</comment>
<gene>
    <name type="primary">ASAH2</name>
    <name type="synonym">HNAC1</name>
</gene>
<sequence>MAKRTFSNLETFLIFLLVMMSAITVALLSLLFITSGTIENHKDLGGHFFSTTQSPPATQGSTAAQRSTATQHSTATQSSTATQTSPVPLTPESPLFQNFSGYHIGVGRADCTGQVADINLMGYGKSGQNAQGILTRLYSRAFIMAEPDGSNRTVFVSIDIGMVSQRLRLEVLNRLQSKYGSLYRRDNVILSGTHTHSGPAGYFQYTVFVIASEGFSNQTFQHMVTGILKSIDIAHTNMKPGKIFINKGNVDGVQINRSPYSYLQNPQSERARYSSNTDKEMIVLKMVDLNGDDLGLISWFAIHPVSMNNSNHLVNSDNVGYASYLLEQEKNKGYLPGQGPFVAAFASSNLGDVSPNILGPRCINTGESCDNANSTCPIGGPSMCIAKGPGQDMFDSTQIIGRAMYQRAKELYASASQEVTGPLASAHQWVDMTDVTVWLNSTHASKTCKPALGYSFAAGTIDGVGGLNFTQGKTEGDPFWDTIRDQILGKPSEEIKECHKPKPILLHTGELSKPHPWHPDIVDVQIITLGSLAITAIPGEFTTMSGRRLREAVQAEFASHGMQNMTVVISGLCNVYTHYITTYEEYQAQRYEAASTIYGPHTLSAYIQLFRNLAKAIATDTVANLSRGPEPPFFKQLIVPLIPSIVDRAPKGRTFGDVLQPAKPEYRVGEVAEVIFVGANPKNSVQNQTHQTFLTVEKYEATSTSWQIVCNDASWETRFYWHKGLLGLSNATVEWHIPDTAQPGIYRIRYFGHNRKQDILKPAVILSFEGTSPAFEVVTI</sequence>
<keyword id="KW-0002">3D-structure</keyword>
<keyword id="KW-0025">Alternative splicing</keyword>
<keyword id="KW-0053">Apoptosis</keyword>
<keyword id="KW-0106">Calcium</keyword>
<keyword id="KW-1003">Cell membrane</keyword>
<keyword id="KW-1015">Disulfide bond</keyword>
<keyword id="KW-0325">Glycoprotein</keyword>
<keyword id="KW-0333">Golgi apparatus</keyword>
<keyword id="KW-0378">Hydrolase</keyword>
<keyword id="KW-0443">Lipid metabolism</keyword>
<keyword id="KW-0472">Membrane</keyword>
<keyword id="KW-0479">Metal-binding</keyword>
<keyword id="KW-0496">Mitochondrion</keyword>
<keyword id="KW-0597">Phosphoprotein</keyword>
<keyword id="KW-1267">Proteomics identification</keyword>
<keyword id="KW-1185">Reference proteome</keyword>
<keyword id="KW-0964">Secreted</keyword>
<keyword id="KW-0735">Signal-anchor</keyword>
<keyword id="KW-0746">Sphingolipid metabolism</keyword>
<keyword id="KW-0812">Transmembrane</keyword>
<keyword id="KW-1133">Transmembrane helix</keyword>
<keyword id="KW-0832">Ubl conjugation</keyword>
<keyword id="KW-0862">Zinc</keyword>
<accession>Q9NR71</accession>
<accession>Q3KNU1</accession>
<accession>Q5SNT7</accession>
<accession>Q5SZP6</accession>
<accession>Q5SZP7</accession>
<accession>Q5T1D5</accession>
<accession>Q71ME6</accession>
<dbReference type="EC" id="3.5.1.-" evidence="2"/>
<dbReference type="EC" id="3.5.1.23" evidence="5 6 8 9 13 15"/>
<dbReference type="EMBL" id="AY049008">
    <property type="protein sequence ID" value="AAL06061.1"/>
    <property type="status" value="ALT_INIT"/>
    <property type="molecule type" value="Genomic_DNA"/>
</dbReference>
<dbReference type="EMBL" id="AF449759">
    <property type="protein sequence ID" value="AAQ04667.2"/>
    <property type="molecule type" value="mRNA"/>
</dbReference>
<dbReference type="EMBL" id="AL450382">
    <property type="status" value="NOT_ANNOTATED_CDS"/>
    <property type="molecule type" value="Genomic_DNA"/>
</dbReference>
<dbReference type="EMBL" id="AL589794">
    <property type="status" value="NOT_ANNOTATED_CDS"/>
    <property type="molecule type" value="Genomic_DNA"/>
</dbReference>
<dbReference type="EMBL" id="AL954360">
    <property type="protein sequence ID" value="CAI17190.1"/>
    <property type="molecule type" value="Genomic_DNA"/>
</dbReference>
<dbReference type="EMBL" id="AF250847">
    <property type="protein sequence ID" value="AAF86240.1"/>
    <property type="molecule type" value="mRNA"/>
</dbReference>
<dbReference type="EMBL" id="BC107105">
    <property type="protein sequence ID" value="AAI07106.1"/>
    <property type="molecule type" value="mRNA"/>
</dbReference>
<dbReference type="CCDS" id="CCDS7239.2">
    <molecule id="Q9NR71-1"/>
</dbReference>
<dbReference type="RefSeq" id="NP_001137446.1">
    <molecule id="Q9NR71-2"/>
    <property type="nucleotide sequence ID" value="NM_001143974.3"/>
</dbReference>
<dbReference type="RefSeq" id="NP_063946.2">
    <molecule id="Q9NR71-1"/>
    <property type="nucleotide sequence ID" value="NM_019893.4"/>
</dbReference>
<dbReference type="RefSeq" id="XP_011538272.1">
    <property type="nucleotide sequence ID" value="XM_011539970.2"/>
</dbReference>
<dbReference type="PDB" id="4WGK">
    <property type="method" value="X-ray"/>
    <property type="resolution" value="2.58 A"/>
    <property type="chains" value="A/B=99-780"/>
</dbReference>
<dbReference type="PDBsum" id="4WGK"/>
<dbReference type="SMR" id="Q9NR71"/>
<dbReference type="BioGRID" id="121160">
    <property type="interactions" value="5"/>
</dbReference>
<dbReference type="FunCoup" id="Q9NR71">
    <property type="interactions" value="204"/>
</dbReference>
<dbReference type="IntAct" id="Q9NR71">
    <property type="interactions" value="4"/>
</dbReference>
<dbReference type="STRING" id="9606.ENSP00000378897"/>
<dbReference type="BindingDB" id="Q9NR71"/>
<dbReference type="ChEMBL" id="CHEMBL2021754"/>
<dbReference type="SwissLipids" id="SLP:000000163"/>
<dbReference type="GlyCosmos" id="Q9NR71">
    <property type="glycosylation" value="21 sites, No reported glycans"/>
</dbReference>
<dbReference type="GlyGen" id="Q9NR71">
    <property type="glycosylation" value="23 sites"/>
</dbReference>
<dbReference type="iPTMnet" id="Q9NR71"/>
<dbReference type="PhosphoSitePlus" id="Q9NR71"/>
<dbReference type="BioMuta" id="ASAH2"/>
<dbReference type="DMDM" id="110832757"/>
<dbReference type="MassIVE" id="Q9NR71"/>
<dbReference type="PaxDb" id="9606-ENSP00000378897"/>
<dbReference type="PeptideAtlas" id="Q9NR71"/>
<dbReference type="ProteomicsDB" id="82290">
    <molecule id="Q9NR71-1"/>
</dbReference>
<dbReference type="ProteomicsDB" id="82291">
    <molecule id="Q9NR71-2"/>
</dbReference>
<dbReference type="Antibodypedia" id="27845">
    <property type="antibodies" value="226 antibodies from 31 providers"/>
</dbReference>
<dbReference type="DNASU" id="56624"/>
<dbReference type="Ensembl" id="ENST00000395526.9">
    <molecule id="Q9NR71-1"/>
    <property type="protein sequence ID" value="ENSP00000378897.3"/>
    <property type="gene ID" value="ENSG00000188611.17"/>
</dbReference>
<dbReference type="Ensembl" id="ENST00000682911.1">
    <molecule id="Q9NR71-1"/>
    <property type="protein sequence ID" value="ENSP00000506746.1"/>
    <property type="gene ID" value="ENSG00000188611.17"/>
</dbReference>
<dbReference type="GeneID" id="56624"/>
<dbReference type="KEGG" id="hsa:56624"/>
<dbReference type="MANE-Select" id="ENST00000682911.1">
    <property type="protein sequence ID" value="ENSP00000506746.1"/>
    <property type="RefSeq nucleotide sequence ID" value="NM_019893.4"/>
    <property type="RefSeq protein sequence ID" value="NP_063946.2"/>
</dbReference>
<dbReference type="UCSC" id="uc001jjd.4">
    <molecule id="Q9NR71-1"/>
    <property type="organism name" value="human"/>
</dbReference>
<dbReference type="AGR" id="HGNC:18860"/>
<dbReference type="CTD" id="56624"/>
<dbReference type="DisGeNET" id="56624"/>
<dbReference type="GeneCards" id="ASAH2"/>
<dbReference type="HGNC" id="HGNC:18860">
    <property type="gene designation" value="ASAH2"/>
</dbReference>
<dbReference type="HPA" id="ENSG00000188611">
    <property type="expression patterns" value="Tissue enriched (intestine)"/>
</dbReference>
<dbReference type="MIM" id="611202">
    <property type="type" value="gene"/>
</dbReference>
<dbReference type="neXtProt" id="NX_Q9NR71"/>
<dbReference type="OpenTargets" id="ENSG00000188611"/>
<dbReference type="PharmGKB" id="PA134977109"/>
<dbReference type="VEuPathDB" id="HostDB:ENSG00000188611"/>
<dbReference type="eggNOG" id="KOG2232">
    <property type="taxonomic scope" value="Eukaryota"/>
</dbReference>
<dbReference type="GeneTree" id="ENSGT00390000015792"/>
<dbReference type="InParanoid" id="Q9NR71"/>
<dbReference type="OMA" id="GTTVQTC"/>
<dbReference type="OrthoDB" id="191371at2759"/>
<dbReference type="PAN-GO" id="Q9NR71">
    <property type="GO annotations" value="5 GO annotations based on evolutionary models"/>
</dbReference>
<dbReference type="PhylomeDB" id="Q9NR71"/>
<dbReference type="TreeFam" id="TF300786"/>
<dbReference type="BRENDA" id="3.5.1.23">
    <property type="organism ID" value="2681"/>
</dbReference>
<dbReference type="PathwayCommons" id="Q9NR71"/>
<dbReference type="Reactome" id="R-HSA-9840310">
    <property type="pathway name" value="Glycosphingolipid catabolism"/>
</dbReference>
<dbReference type="SABIO-RK" id="Q9NR71"/>
<dbReference type="SignaLink" id="Q9NR71"/>
<dbReference type="UniPathway" id="UPA00222"/>
<dbReference type="BioGRID-ORCS" id="56624">
    <property type="hits" value="14 hits in 1147 CRISPR screens"/>
</dbReference>
<dbReference type="ChiTaRS" id="ASAH2">
    <property type="organism name" value="human"/>
</dbReference>
<dbReference type="EvolutionaryTrace" id="Q9NR71"/>
<dbReference type="GeneWiki" id="ASAH2"/>
<dbReference type="GenomeRNAi" id="56624"/>
<dbReference type="Pharos" id="Q9NR71">
    <property type="development level" value="Tchem"/>
</dbReference>
<dbReference type="PRO" id="PR:Q9NR71"/>
<dbReference type="Proteomes" id="UP000005640">
    <property type="component" value="Chromosome 10"/>
</dbReference>
<dbReference type="RNAct" id="Q9NR71">
    <property type="molecule type" value="protein"/>
</dbReference>
<dbReference type="Bgee" id="ENSG00000188611">
    <property type="expression patterns" value="Expressed in duodenum and 102 other cell types or tissues"/>
</dbReference>
<dbReference type="ExpressionAtlas" id="Q9NR71">
    <property type="expression patterns" value="baseline and differential"/>
</dbReference>
<dbReference type="GO" id="GO:0005901">
    <property type="term" value="C:caveola"/>
    <property type="evidence" value="ECO:0000250"/>
    <property type="project" value="UniProtKB"/>
</dbReference>
<dbReference type="GO" id="GO:0070062">
    <property type="term" value="C:extracellular exosome"/>
    <property type="evidence" value="ECO:0000314"/>
    <property type="project" value="UniProtKB"/>
</dbReference>
<dbReference type="GO" id="GO:0005576">
    <property type="term" value="C:extracellular region"/>
    <property type="evidence" value="ECO:0000318"/>
    <property type="project" value="GO_Central"/>
</dbReference>
<dbReference type="GO" id="GO:0005794">
    <property type="term" value="C:Golgi apparatus"/>
    <property type="evidence" value="ECO:0000314"/>
    <property type="project" value="UniProtKB"/>
</dbReference>
<dbReference type="GO" id="GO:0000139">
    <property type="term" value="C:Golgi membrane"/>
    <property type="evidence" value="ECO:0007669"/>
    <property type="project" value="UniProtKB-SubCell"/>
</dbReference>
<dbReference type="GO" id="GO:0005739">
    <property type="term" value="C:mitochondrion"/>
    <property type="evidence" value="ECO:0000314"/>
    <property type="project" value="UniProtKB"/>
</dbReference>
<dbReference type="GO" id="GO:0005886">
    <property type="term" value="C:plasma membrane"/>
    <property type="evidence" value="ECO:0000314"/>
    <property type="project" value="UniProtKB"/>
</dbReference>
<dbReference type="GO" id="GO:0005509">
    <property type="term" value="F:calcium ion binding"/>
    <property type="evidence" value="ECO:0000314"/>
    <property type="project" value="UniProtKB"/>
</dbReference>
<dbReference type="GO" id="GO:0017040">
    <property type="term" value="F:N-acylsphingosine amidohydrolase activity"/>
    <property type="evidence" value="ECO:0000314"/>
    <property type="project" value="UniProtKB"/>
</dbReference>
<dbReference type="GO" id="GO:0008270">
    <property type="term" value="F:zinc ion binding"/>
    <property type="evidence" value="ECO:0000314"/>
    <property type="project" value="UniProtKB"/>
</dbReference>
<dbReference type="GO" id="GO:0006915">
    <property type="term" value="P:apoptotic process"/>
    <property type="evidence" value="ECO:0007669"/>
    <property type="project" value="UniProtKB-KW"/>
</dbReference>
<dbReference type="GO" id="GO:0071345">
    <property type="term" value="P:cellular response to cytokine stimulus"/>
    <property type="evidence" value="ECO:0000314"/>
    <property type="project" value="UniProtKB"/>
</dbReference>
<dbReference type="GO" id="GO:0046513">
    <property type="term" value="P:ceramide biosynthetic process"/>
    <property type="evidence" value="ECO:0000314"/>
    <property type="project" value="UniProtKB"/>
</dbReference>
<dbReference type="GO" id="GO:0046514">
    <property type="term" value="P:ceramide catabolic process"/>
    <property type="evidence" value="ECO:0000314"/>
    <property type="project" value="UniProtKB"/>
</dbReference>
<dbReference type="GO" id="GO:0006672">
    <property type="term" value="P:ceramide metabolic process"/>
    <property type="evidence" value="ECO:0000314"/>
    <property type="project" value="UniProtKB"/>
</dbReference>
<dbReference type="GO" id="GO:0044241">
    <property type="term" value="P:lipid digestion"/>
    <property type="evidence" value="ECO:0000250"/>
    <property type="project" value="UniProtKB"/>
</dbReference>
<dbReference type="GO" id="GO:0042759">
    <property type="term" value="P:long-chain fatty acid biosynthetic process"/>
    <property type="evidence" value="ECO:0000318"/>
    <property type="project" value="GO_Central"/>
</dbReference>
<dbReference type="GO" id="GO:2001234">
    <property type="term" value="P:negative regulation of apoptotic signaling pathway"/>
    <property type="evidence" value="ECO:0000315"/>
    <property type="project" value="UniProtKB"/>
</dbReference>
<dbReference type="GO" id="GO:0007346">
    <property type="term" value="P:regulation of mitotic cell cycle"/>
    <property type="evidence" value="ECO:0000315"/>
    <property type="project" value="UniProtKB"/>
</dbReference>
<dbReference type="GO" id="GO:0046512">
    <property type="term" value="P:sphingosine biosynthetic process"/>
    <property type="evidence" value="ECO:0000315"/>
    <property type="project" value="UniProtKB"/>
</dbReference>
<dbReference type="GO" id="GO:0006670">
    <property type="term" value="P:sphingosine metabolic process"/>
    <property type="evidence" value="ECO:0000314"/>
    <property type="project" value="UniProtKB"/>
</dbReference>
<dbReference type="FunFam" id="2.60.40.2300:FF:000001">
    <property type="entry name" value="N-acylsphingosine amidohydrolase 2"/>
    <property type="match status" value="1"/>
</dbReference>
<dbReference type="Gene3D" id="2.60.40.2300">
    <property type="entry name" value="Neutral/alkaline non-lysosomal ceramidase, C-terminal domain"/>
    <property type="match status" value="1"/>
</dbReference>
<dbReference type="InterPro" id="IPR006823">
    <property type="entry name" value="Ceramidase_alk"/>
</dbReference>
<dbReference type="InterPro" id="IPR038445">
    <property type="entry name" value="NCDase_C_sf"/>
</dbReference>
<dbReference type="InterPro" id="IPR031331">
    <property type="entry name" value="NEUT/ALK_ceramidase_C"/>
</dbReference>
<dbReference type="InterPro" id="IPR031329">
    <property type="entry name" value="NEUT/ALK_ceramidase_N"/>
</dbReference>
<dbReference type="PANTHER" id="PTHR12670">
    <property type="entry name" value="CERAMIDASE"/>
    <property type="match status" value="1"/>
</dbReference>
<dbReference type="PANTHER" id="PTHR12670:SF1">
    <property type="entry name" value="NEUTRAL CERAMIDASE"/>
    <property type="match status" value="1"/>
</dbReference>
<dbReference type="Pfam" id="PF04734">
    <property type="entry name" value="Ceramidase_alk"/>
    <property type="match status" value="1"/>
</dbReference>
<dbReference type="Pfam" id="PF17048">
    <property type="entry name" value="Ceramidse_alk_C"/>
    <property type="match status" value="1"/>
</dbReference>